<comment type="subcellular location">
    <subcellularLocation>
        <location evidence="3">Secreted</location>
    </subcellularLocation>
</comment>
<sequence>MDSKWFFIVLISFLLVLPSIVTPYRKSVEITNEEPQRDIYQLEKTNKMAEVGDLGVASFLNILDTSSSSSSSSSSSSSSSSSSSSSSSSSSSSSSSSSSSSSSSSSSSSSSSSSSSSSSSSSSSSSSSSSSSSSSSSSSSSSSSSSSSSSSSSSSSSSSSSSSSSSSSSSSSSSSSSSSSSSSSSSSSSSSSSSSSSSSSSSSSSSSSSSSSSSSSSSSSSSSSSSSSSSSSSSSSSSSSSSSSSSSSSSSSSSSSSSSSSSSSSSSSSSSSSSSSSSSSSSSSSSSSSSSSSSSSSSSSSSSSSSSSSSSSSSSSSSSSSSSSSSSSSSSSSSSSSSSSSSSSSSSSSSSSSSSSSSSSSSSSSSSSSSSGEN</sequence>
<feature type="signal peptide" evidence="1">
    <location>
        <begin position="1"/>
        <end position="23"/>
    </location>
</feature>
<feature type="chain" id="PRO_0000348160" description="Uncharacterized protein DDB_G0271670">
    <location>
        <begin position="24"/>
        <end position="374"/>
    </location>
</feature>
<feature type="region of interest" description="Disordered" evidence="2">
    <location>
        <begin position="66"/>
        <end position="374"/>
    </location>
</feature>
<evidence type="ECO:0000255" key="1"/>
<evidence type="ECO:0000256" key="2">
    <source>
        <dbReference type="SAM" id="MobiDB-lite"/>
    </source>
</evidence>
<evidence type="ECO:0000305" key="3"/>
<dbReference type="EMBL" id="AAFI02000006">
    <property type="protein sequence ID" value="EAL71525.1"/>
    <property type="molecule type" value="Genomic_DNA"/>
</dbReference>
<dbReference type="RefSeq" id="XP_645495.1">
    <property type="nucleotide sequence ID" value="XM_640403.1"/>
</dbReference>
<dbReference type="SMR" id="Q75JC9"/>
<dbReference type="PaxDb" id="44689-DDB0168484"/>
<dbReference type="EnsemblProtists" id="EAL71525">
    <property type="protein sequence ID" value="EAL71525"/>
    <property type="gene ID" value="DDB_G0271670"/>
</dbReference>
<dbReference type="GeneID" id="8618123"/>
<dbReference type="KEGG" id="ddi:DDB_G0271670"/>
<dbReference type="dictyBase" id="DDB_G0271670">
    <property type="gene designation" value="lsr1"/>
</dbReference>
<dbReference type="VEuPathDB" id="AmoebaDB:DDB_G0271670"/>
<dbReference type="eggNOG" id="ENOG502RSP5">
    <property type="taxonomic scope" value="Eukaryota"/>
</dbReference>
<dbReference type="HOGENOM" id="CLU_740642_0_0_1"/>
<dbReference type="InParanoid" id="Q75JC9"/>
<dbReference type="OMA" id="GAEIAHH"/>
<dbReference type="PRO" id="PR:Q75JC9"/>
<dbReference type="Proteomes" id="UP000002195">
    <property type="component" value="Chromosome 2"/>
</dbReference>
<dbReference type="GO" id="GO:0005576">
    <property type="term" value="C:extracellular region"/>
    <property type="evidence" value="ECO:0007669"/>
    <property type="project" value="UniProtKB-SubCell"/>
</dbReference>
<proteinExistence type="inferred from homology"/>
<keyword id="KW-1185">Reference proteome</keyword>
<keyword id="KW-0964">Secreted</keyword>
<keyword id="KW-0732">Signal</keyword>
<gene>
    <name type="ORF">DDB_G0271670</name>
</gene>
<protein>
    <recommendedName>
        <fullName>Uncharacterized protein DDB_G0271670</fullName>
    </recommendedName>
</protein>
<accession>Q75JC9</accession>
<accession>Q55AM7</accession>
<organism>
    <name type="scientific">Dictyostelium discoideum</name>
    <name type="common">Social amoeba</name>
    <dbReference type="NCBI Taxonomy" id="44689"/>
    <lineage>
        <taxon>Eukaryota</taxon>
        <taxon>Amoebozoa</taxon>
        <taxon>Evosea</taxon>
        <taxon>Eumycetozoa</taxon>
        <taxon>Dictyostelia</taxon>
        <taxon>Dictyosteliales</taxon>
        <taxon>Dictyosteliaceae</taxon>
        <taxon>Dictyostelium</taxon>
    </lineage>
</organism>
<name>Y8484_DICDI</name>
<reference key="1">
    <citation type="journal article" date="2002" name="Nature">
        <title>Sequence and analysis of chromosome 2 of Dictyostelium discoideum.</title>
        <authorList>
            <person name="Gloeckner G."/>
            <person name="Eichinger L."/>
            <person name="Szafranski K."/>
            <person name="Pachebat J.A."/>
            <person name="Bankier A.T."/>
            <person name="Dear P.H."/>
            <person name="Lehmann R."/>
            <person name="Baumgart C."/>
            <person name="Parra G."/>
            <person name="Abril J.F."/>
            <person name="Guigo R."/>
            <person name="Kumpf K."/>
            <person name="Tunggal B."/>
            <person name="Cox E.C."/>
            <person name="Quail M.A."/>
            <person name="Platzer M."/>
            <person name="Rosenthal A."/>
            <person name="Noegel A.A."/>
        </authorList>
    </citation>
    <scope>NUCLEOTIDE SEQUENCE [LARGE SCALE GENOMIC DNA]</scope>
    <source>
        <strain>AX4</strain>
    </source>
</reference>
<reference key="2">
    <citation type="journal article" date="2005" name="Nature">
        <title>The genome of the social amoeba Dictyostelium discoideum.</title>
        <authorList>
            <person name="Eichinger L."/>
            <person name="Pachebat J.A."/>
            <person name="Gloeckner G."/>
            <person name="Rajandream M.A."/>
            <person name="Sucgang R."/>
            <person name="Berriman M."/>
            <person name="Song J."/>
            <person name="Olsen R."/>
            <person name="Szafranski K."/>
            <person name="Xu Q."/>
            <person name="Tunggal B."/>
            <person name="Kummerfeld S."/>
            <person name="Madera M."/>
            <person name="Konfortov B.A."/>
            <person name="Rivero F."/>
            <person name="Bankier A.T."/>
            <person name="Lehmann R."/>
            <person name="Hamlin N."/>
            <person name="Davies R."/>
            <person name="Gaudet P."/>
            <person name="Fey P."/>
            <person name="Pilcher K."/>
            <person name="Chen G."/>
            <person name="Saunders D."/>
            <person name="Sodergren E.J."/>
            <person name="Davis P."/>
            <person name="Kerhornou A."/>
            <person name="Nie X."/>
            <person name="Hall N."/>
            <person name="Anjard C."/>
            <person name="Hemphill L."/>
            <person name="Bason N."/>
            <person name="Farbrother P."/>
            <person name="Desany B."/>
            <person name="Just E."/>
            <person name="Morio T."/>
            <person name="Rost R."/>
            <person name="Churcher C.M."/>
            <person name="Cooper J."/>
            <person name="Haydock S."/>
            <person name="van Driessche N."/>
            <person name="Cronin A."/>
            <person name="Goodhead I."/>
            <person name="Muzny D.M."/>
            <person name="Mourier T."/>
            <person name="Pain A."/>
            <person name="Lu M."/>
            <person name="Harper D."/>
            <person name="Lindsay R."/>
            <person name="Hauser H."/>
            <person name="James K.D."/>
            <person name="Quiles M."/>
            <person name="Madan Babu M."/>
            <person name="Saito T."/>
            <person name="Buchrieser C."/>
            <person name="Wardroper A."/>
            <person name="Felder M."/>
            <person name="Thangavelu M."/>
            <person name="Johnson D."/>
            <person name="Knights A."/>
            <person name="Loulseged H."/>
            <person name="Mungall K.L."/>
            <person name="Oliver K."/>
            <person name="Price C."/>
            <person name="Quail M.A."/>
            <person name="Urushihara H."/>
            <person name="Hernandez J."/>
            <person name="Rabbinowitsch E."/>
            <person name="Steffen D."/>
            <person name="Sanders M."/>
            <person name="Ma J."/>
            <person name="Kohara Y."/>
            <person name="Sharp S."/>
            <person name="Simmonds M.N."/>
            <person name="Spiegler S."/>
            <person name="Tivey A."/>
            <person name="Sugano S."/>
            <person name="White B."/>
            <person name="Walker D."/>
            <person name="Woodward J.R."/>
            <person name="Winckler T."/>
            <person name="Tanaka Y."/>
            <person name="Shaulsky G."/>
            <person name="Schleicher M."/>
            <person name="Weinstock G.M."/>
            <person name="Rosenthal A."/>
            <person name="Cox E.C."/>
            <person name="Chisholm R.L."/>
            <person name="Gibbs R.A."/>
            <person name="Loomis W.F."/>
            <person name="Platzer M."/>
            <person name="Kay R.R."/>
            <person name="Williams J.G."/>
            <person name="Dear P.H."/>
            <person name="Noegel A.A."/>
            <person name="Barrell B.G."/>
            <person name="Kuspa A."/>
        </authorList>
    </citation>
    <scope>NUCLEOTIDE SEQUENCE [LARGE SCALE GENOMIC DNA]</scope>
    <source>
        <strain>AX4</strain>
    </source>
</reference>